<sequence>MYRPRPMLSPSRFFTPFAVAFVVIITVGLLAMMAGLLIHFLAFDKKAYFYHSSFQILNVEYTEALNSPATHEYRTLSERIEAMITDEFRGSSLKSEFIRTHVVKLRKEGTGVVADVVMKFRSSKRNNRKVMKTRIQSVLRRLSSSGNLEIAPSNEITSLTDQDTENVLTQECGARPDLITLSEERIIGGMQAEPGDWPWQVSLQLNNVHHCGGALISNMWVLTAAHCFKSYPNPQYWTATFGVSTMSPRLRVRVRAILAHDGYSSVTRDNDIAVVQLDRSVAFSRNIHRVCLPAATQNIIPGSVAYVTGWGSLTYGGNAVTNLRQGEVRIISSEECNTPAGYSGSVLPGMLCAGMRSGAVDACQGDSGGPLVQEDSRRLWFVVGIVSWGYQCGLPNKPGVYTRVTAYRNWIRQQTGI</sequence>
<name>TM11D_MOUSE</name>
<organism>
    <name type="scientific">Mus musculus</name>
    <name type="common">Mouse</name>
    <dbReference type="NCBI Taxonomy" id="10090"/>
    <lineage>
        <taxon>Eukaryota</taxon>
        <taxon>Metazoa</taxon>
        <taxon>Chordata</taxon>
        <taxon>Craniata</taxon>
        <taxon>Vertebrata</taxon>
        <taxon>Euteleostomi</taxon>
        <taxon>Mammalia</taxon>
        <taxon>Eutheria</taxon>
        <taxon>Euarchontoglires</taxon>
        <taxon>Glires</taxon>
        <taxon>Rodentia</taxon>
        <taxon>Myomorpha</taxon>
        <taxon>Muroidea</taxon>
        <taxon>Muridae</taxon>
        <taxon>Murinae</taxon>
        <taxon>Mus</taxon>
        <taxon>Mus</taxon>
    </lineage>
</organism>
<gene>
    <name type="primary">Tmprss11d</name>
    <name type="synonym">Mat</name>
</gene>
<comment type="function">
    <text evidence="1 6">May play some biological role in the host defense system on the mucous membrane independently of or in cooperation with other substances in airway mucous or bronchial secretions. Preferentially cleaves the C-terminal side of arginine residues at the P1 position of certain peptides (By similarity). Plays a role in the proteolytic processing of ACE2. Isoform 2 may play a key role in regulating adrenal proliferation by specifically cleaving N-POMC.</text>
</comment>
<comment type="subunit">
    <text evidence="1">Monomer.</text>
</comment>
<comment type="subcellular location">
    <subcellularLocation>
        <location evidence="1">Cell membrane</location>
        <topology evidence="1">Single-pass type II membrane protein</topology>
    </subcellularLocation>
</comment>
<comment type="subcellular location">
    <molecule>Transmembrane protease serine 11D catalytic chain</molecule>
    <subcellularLocation>
        <location evidence="1">Secreted</location>
    </subcellularLocation>
    <text evidence="1">Activated by cleavage and secreted.</text>
</comment>
<comment type="alternative products">
    <event type="alternative splicing"/>
    <isoform>
        <id>Q8VHK8-1</id>
        <name>1</name>
        <name>MAT1</name>
        <sequence type="displayed"/>
    </isoform>
    <isoform>
        <id>Q8VHK8-2</id>
        <name>2</name>
        <name>MAT2</name>
        <sequence type="described" ref="VSP_014519 VSP_014520"/>
    </isoform>
</comment>
<comment type="tissue specificity">
    <text evidence="5">Highly expressed in the esophagus, tongue, and trachea, low expression was seen in heart, lung, and adrenal gland. Isoform 2 is also highly expressed in the adrenal gland.</text>
</comment>
<comment type="similarity">
    <text evidence="4">Belongs to the peptidase S1 family.</text>
</comment>
<evidence type="ECO:0000250" key="1"/>
<evidence type="ECO:0000255" key="2"/>
<evidence type="ECO:0000255" key="3">
    <source>
        <dbReference type="PROSITE-ProRule" id="PRU00188"/>
    </source>
</evidence>
<evidence type="ECO:0000255" key="4">
    <source>
        <dbReference type="PROSITE-ProRule" id="PRU00274"/>
    </source>
</evidence>
<evidence type="ECO:0000269" key="5">
    <source>
    </source>
</evidence>
<evidence type="ECO:0000269" key="6">
    <source>
    </source>
</evidence>
<evidence type="ECO:0000303" key="7">
    <source>
    </source>
</evidence>
<evidence type="ECO:0000305" key="8"/>
<evidence type="ECO:0007829" key="9">
    <source>
        <dbReference type="PDB" id="2E7V"/>
    </source>
</evidence>
<feature type="chain" id="PRO_0000027887" description="Transmembrane protease serine 11D non-catalytic chain">
    <location>
        <begin position="1"/>
        <end position="185"/>
    </location>
</feature>
<feature type="chain" id="PRO_0000027888" description="Transmembrane protease serine 11D catalytic chain">
    <location>
        <begin position="186"/>
        <end position="417"/>
    </location>
</feature>
<feature type="topological domain" description="Cytoplasmic" evidence="2">
    <location>
        <begin position="1"/>
        <end position="17"/>
    </location>
</feature>
<feature type="transmembrane region" description="Helical; Signal-anchor for type II membrane protein" evidence="2">
    <location>
        <begin position="18"/>
        <end position="38"/>
    </location>
</feature>
<feature type="topological domain" description="Extracellular" evidence="2">
    <location>
        <begin position="39"/>
        <end position="417"/>
    </location>
</feature>
<feature type="domain" description="SEA" evidence="3">
    <location>
        <begin position="46"/>
        <end position="162"/>
    </location>
</feature>
<feature type="domain" description="Peptidase S1" evidence="4">
    <location>
        <begin position="186"/>
        <end position="417"/>
    </location>
</feature>
<feature type="active site" description="Charge relay system" evidence="1">
    <location>
        <position position="226"/>
    </location>
</feature>
<feature type="active site" description="Charge relay system" evidence="1">
    <location>
        <position position="271"/>
    </location>
</feature>
<feature type="active site" description="Charge relay system" evidence="1">
    <location>
        <position position="367"/>
    </location>
</feature>
<feature type="disulfide bond" description="Interchain (between non-catalytic and catalytic chains)" evidence="4">
    <location>
        <begin position="172"/>
        <end position="291"/>
    </location>
</feature>
<feature type="disulfide bond" evidence="4">
    <location>
        <begin position="211"/>
        <end position="227"/>
    </location>
</feature>
<feature type="disulfide bond" evidence="4">
    <location>
        <begin position="336"/>
        <end position="352"/>
    </location>
</feature>
<feature type="disulfide bond" evidence="4">
    <location>
        <begin position="363"/>
        <end position="392"/>
    </location>
</feature>
<feature type="splice variant" id="VSP_014519" description="In isoform 2." evidence="7">
    <location>
        <begin position="1"/>
        <end position="138"/>
    </location>
</feature>
<feature type="splice variant" id="VSP_014520" description="In isoform 2." evidence="7">
    <original>LRRLSSSGNLEIAPSNEITS</original>
    <variation>MIFSFCFVDFVLTFSFLMIA</variation>
    <location>
        <begin position="139"/>
        <end position="158"/>
    </location>
</feature>
<feature type="sequence conflict" description="In Ref. 1; AAL47139." evidence="8" ref="1">
    <original>F</original>
    <variation>L</variation>
    <location>
        <position position="43"/>
    </location>
</feature>
<feature type="strand" evidence="9">
    <location>
        <begin position="46"/>
        <end position="60"/>
    </location>
</feature>
<feature type="helix" evidence="9">
    <location>
        <begin position="63"/>
        <end position="66"/>
    </location>
</feature>
<feature type="helix" evidence="9">
    <location>
        <begin position="71"/>
        <end position="89"/>
    </location>
</feature>
<feature type="turn" evidence="9">
    <location>
        <begin position="92"/>
        <end position="96"/>
    </location>
</feature>
<feature type="strand" evidence="9">
    <location>
        <begin position="97"/>
        <end position="108"/>
    </location>
</feature>
<feature type="strand" evidence="9">
    <location>
        <begin position="111"/>
        <end position="122"/>
    </location>
</feature>
<feature type="helix" evidence="9">
    <location>
        <begin position="128"/>
        <end position="139"/>
    </location>
</feature>
<feature type="helix" evidence="9">
    <location>
        <begin position="140"/>
        <end position="142"/>
    </location>
</feature>
<feature type="strand" evidence="9">
    <location>
        <begin position="144"/>
        <end position="150"/>
    </location>
</feature>
<accession>Q8VHK8</accession>
<accession>Q7TNX3</accession>
<accession>Q8VDV1</accession>
<proteinExistence type="evidence at protein level"/>
<keyword id="KW-0002">3D-structure</keyword>
<keyword id="KW-0025">Alternative splicing</keyword>
<keyword id="KW-1003">Cell membrane</keyword>
<keyword id="KW-1015">Disulfide bond</keyword>
<keyword id="KW-0378">Hydrolase</keyword>
<keyword id="KW-0472">Membrane</keyword>
<keyword id="KW-0645">Protease</keyword>
<keyword id="KW-1185">Reference proteome</keyword>
<keyword id="KW-0964">Secreted</keyword>
<keyword id="KW-0720">Serine protease</keyword>
<keyword id="KW-0735">Signal-anchor</keyword>
<keyword id="KW-0812">Transmembrane</keyword>
<keyword id="KW-1133">Transmembrane helix</keyword>
<keyword id="KW-0865">Zymogen</keyword>
<dbReference type="EC" id="3.4.21.-"/>
<dbReference type="EMBL" id="AF448809">
    <property type="protein sequence ID" value="AAL47139.1"/>
    <property type="molecule type" value="mRNA"/>
</dbReference>
<dbReference type="EMBL" id="AF539752">
    <property type="protein sequence ID" value="AAP97729.1"/>
    <property type="molecule type" value="mRNA"/>
</dbReference>
<dbReference type="EMBL" id="AB053953">
    <property type="protein sequence ID" value="BAD89353.1"/>
    <property type="molecule type" value="mRNA"/>
</dbReference>
<dbReference type="EMBL" id="BC020151">
    <property type="protein sequence ID" value="AAH20151.1"/>
    <property type="molecule type" value="mRNA"/>
</dbReference>
<dbReference type="CCDS" id="CCDS39124.1">
    <molecule id="Q8VHK8-1"/>
</dbReference>
<dbReference type="RefSeq" id="NP_663536.1">
    <molecule id="Q8VHK8-1"/>
    <property type="nucleotide sequence ID" value="NM_145561.2"/>
</dbReference>
<dbReference type="PDB" id="2E7V">
    <property type="method" value="X-ray"/>
    <property type="resolution" value="1.92 A"/>
    <property type="chains" value="A=44-164"/>
</dbReference>
<dbReference type="PDBsum" id="2E7V"/>
<dbReference type="SMR" id="Q8VHK8"/>
<dbReference type="FunCoup" id="Q8VHK8">
    <property type="interactions" value="11"/>
</dbReference>
<dbReference type="STRING" id="10090.ENSMUSP00000031175"/>
<dbReference type="PaxDb" id="10090-ENSMUSP00000031175"/>
<dbReference type="ProteomicsDB" id="259214">
    <molecule id="Q8VHK8-1"/>
</dbReference>
<dbReference type="ProteomicsDB" id="259215">
    <molecule id="Q8VHK8-2"/>
</dbReference>
<dbReference type="Antibodypedia" id="12680">
    <property type="antibodies" value="149 antibodies from 28 providers"/>
</dbReference>
<dbReference type="DNASU" id="231382"/>
<dbReference type="Ensembl" id="ENSMUST00000031175.12">
    <molecule id="Q8VHK8-1"/>
    <property type="protein sequence ID" value="ENSMUSP00000031175.6"/>
    <property type="gene ID" value="ENSMUSG00000061259.12"/>
</dbReference>
<dbReference type="Ensembl" id="ENSMUST00000122377.2">
    <molecule id="Q8VHK8-2"/>
    <property type="protein sequence ID" value="ENSMUSP00000113079.2"/>
    <property type="gene ID" value="ENSMUSG00000061259.12"/>
</dbReference>
<dbReference type="GeneID" id="231382"/>
<dbReference type="KEGG" id="mmu:231382"/>
<dbReference type="UCSC" id="uc008xxo.1">
    <molecule id="Q8VHK8-2"/>
    <property type="organism name" value="mouse"/>
</dbReference>
<dbReference type="UCSC" id="uc008xxp.1">
    <molecule id="Q8VHK8-1"/>
    <property type="organism name" value="mouse"/>
</dbReference>
<dbReference type="AGR" id="MGI:2385221"/>
<dbReference type="CTD" id="9407"/>
<dbReference type="MGI" id="MGI:2385221">
    <property type="gene designation" value="Tmprss11d"/>
</dbReference>
<dbReference type="VEuPathDB" id="HostDB:ENSMUSG00000061259"/>
<dbReference type="eggNOG" id="KOG3627">
    <property type="taxonomic scope" value="Eukaryota"/>
</dbReference>
<dbReference type="GeneTree" id="ENSGT00940000161719"/>
<dbReference type="HOGENOM" id="CLU_006842_19_0_1"/>
<dbReference type="InParanoid" id="Q8VHK8"/>
<dbReference type="OMA" id="QILNVEY"/>
<dbReference type="OrthoDB" id="9425590at2759"/>
<dbReference type="PhylomeDB" id="Q8VHK8"/>
<dbReference type="TreeFam" id="TF351684"/>
<dbReference type="BioGRID-ORCS" id="231382">
    <property type="hits" value="3 hits in 77 CRISPR screens"/>
</dbReference>
<dbReference type="ChiTaRS" id="Tmprss11d">
    <property type="organism name" value="mouse"/>
</dbReference>
<dbReference type="EvolutionaryTrace" id="Q8VHK8"/>
<dbReference type="PRO" id="PR:Q8VHK8"/>
<dbReference type="Proteomes" id="UP000000589">
    <property type="component" value="Chromosome 5"/>
</dbReference>
<dbReference type="RNAct" id="Q8VHK8">
    <property type="molecule type" value="protein"/>
</dbReference>
<dbReference type="Bgee" id="ENSMUSG00000061259">
    <property type="expression patterns" value="Expressed in esophagus and 14 other cell types or tissues"/>
</dbReference>
<dbReference type="GO" id="GO:0005576">
    <property type="term" value="C:extracellular region"/>
    <property type="evidence" value="ECO:0007669"/>
    <property type="project" value="UniProtKB-SubCell"/>
</dbReference>
<dbReference type="GO" id="GO:0005886">
    <property type="term" value="C:plasma membrane"/>
    <property type="evidence" value="ECO:0007669"/>
    <property type="project" value="UniProtKB-SubCell"/>
</dbReference>
<dbReference type="GO" id="GO:0004252">
    <property type="term" value="F:serine-type endopeptidase activity"/>
    <property type="evidence" value="ECO:0007669"/>
    <property type="project" value="InterPro"/>
</dbReference>
<dbReference type="GO" id="GO:0008236">
    <property type="term" value="F:serine-type peptidase activity"/>
    <property type="evidence" value="ECO:0000266"/>
    <property type="project" value="MGI"/>
</dbReference>
<dbReference type="GO" id="GO:0006508">
    <property type="term" value="P:proteolysis"/>
    <property type="evidence" value="ECO:0000314"/>
    <property type="project" value="UniProtKB"/>
</dbReference>
<dbReference type="GO" id="GO:0046718">
    <property type="term" value="P:symbiont entry into host cell"/>
    <property type="evidence" value="ECO:0000266"/>
    <property type="project" value="MGI"/>
</dbReference>
<dbReference type="CDD" id="cd00190">
    <property type="entry name" value="Tryp_SPc"/>
    <property type="match status" value="1"/>
</dbReference>
<dbReference type="FunFam" id="2.40.10.10:FF:000003">
    <property type="entry name" value="Transmembrane serine protease 3"/>
    <property type="match status" value="1"/>
</dbReference>
<dbReference type="Gene3D" id="3.30.70.960">
    <property type="entry name" value="SEA domain"/>
    <property type="match status" value="1"/>
</dbReference>
<dbReference type="Gene3D" id="2.40.10.10">
    <property type="entry name" value="Trypsin-like serine proteases"/>
    <property type="match status" value="2"/>
</dbReference>
<dbReference type="InterPro" id="IPR017329">
    <property type="entry name" value="Pept_S1A_HAT/DESC1"/>
</dbReference>
<dbReference type="InterPro" id="IPR009003">
    <property type="entry name" value="Peptidase_S1_PA"/>
</dbReference>
<dbReference type="InterPro" id="IPR043504">
    <property type="entry name" value="Peptidase_S1_PA_chymotrypsin"/>
</dbReference>
<dbReference type="InterPro" id="IPR001314">
    <property type="entry name" value="Peptidase_S1A"/>
</dbReference>
<dbReference type="InterPro" id="IPR000082">
    <property type="entry name" value="SEA_dom"/>
</dbReference>
<dbReference type="InterPro" id="IPR036364">
    <property type="entry name" value="SEA_dom_sf"/>
</dbReference>
<dbReference type="InterPro" id="IPR001254">
    <property type="entry name" value="Trypsin_dom"/>
</dbReference>
<dbReference type="InterPro" id="IPR018114">
    <property type="entry name" value="TRYPSIN_HIS"/>
</dbReference>
<dbReference type="InterPro" id="IPR033116">
    <property type="entry name" value="TRYPSIN_SER"/>
</dbReference>
<dbReference type="PANTHER" id="PTHR24252">
    <property type="entry name" value="ACROSIN-RELATED"/>
    <property type="match status" value="1"/>
</dbReference>
<dbReference type="PANTHER" id="PTHR24252:SF7">
    <property type="entry name" value="HYALIN"/>
    <property type="match status" value="1"/>
</dbReference>
<dbReference type="Pfam" id="PF01390">
    <property type="entry name" value="SEA"/>
    <property type="match status" value="1"/>
</dbReference>
<dbReference type="Pfam" id="PF00089">
    <property type="entry name" value="Trypsin"/>
    <property type="match status" value="1"/>
</dbReference>
<dbReference type="PIRSF" id="PIRSF037941">
    <property type="entry name" value="TMPRSS11ABCDE"/>
    <property type="match status" value="1"/>
</dbReference>
<dbReference type="PRINTS" id="PR00722">
    <property type="entry name" value="CHYMOTRYPSIN"/>
</dbReference>
<dbReference type="SMART" id="SM00020">
    <property type="entry name" value="Tryp_SPc"/>
    <property type="match status" value="1"/>
</dbReference>
<dbReference type="SUPFAM" id="SSF82671">
    <property type="entry name" value="SEA domain"/>
    <property type="match status" value="1"/>
</dbReference>
<dbReference type="SUPFAM" id="SSF50494">
    <property type="entry name" value="Trypsin-like serine proteases"/>
    <property type="match status" value="1"/>
</dbReference>
<dbReference type="PROSITE" id="PS50024">
    <property type="entry name" value="SEA"/>
    <property type="match status" value="1"/>
</dbReference>
<dbReference type="PROSITE" id="PS50240">
    <property type="entry name" value="TRYPSIN_DOM"/>
    <property type="match status" value="1"/>
</dbReference>
<dbReference type="PROSITE" id="PS00134">
    <property type="entry name" value="TRYPSIN_HIS"/>
    <property type="match status" value="1"/>
</dbReference>
<dbReference type="PROSITE" id="PS00135">
    <property type="entry name" value="TRYPSIN_SER"/>
    <property type="match status" value="1"/>
</dbReference>
<reference key="1">
    <citation type="journal article" date="2004" name="Endocrinology">
        <title>The adrenal secretory serine protease AsP is a short secretory isoform of the transmembrane airway trypsin-like protease.</title>
        <authorList>
            <person name="Hansen I.A."/>
            <person name="Fassnacht M."/>
            <person name="Hahner S."/>
            <person name="Hammer F."/>
            <person name="Schammann M."/>
            <person name="Meyer S.R."/>
            <person name="Bicknell A.B."/>
            <person name="Allolio B."/>
        </authorList>
    </citation>
    <scope>NUCLEOTIDE SEQUENCE [MRNA] (ISOFORMS 1 AND 2)</scope>
    <scope>TISSUE SPECIFICITY</scope>
    <scope>ALTERNATIVE SPLICING</scope>
    <source>
        <strain>Czech II</strain>
        <tissue>Tongue</tissue>
        <tissue>Trachea</tissue>
    </source>
</reference>
<reference key="2">
    <citation type="submission" date="2001-01" db="EMBL/GenBank/DDBJ databases">
        <title>Molecular cloning and expression of murine homologue of human airway trypsin-like protease gene.</title>
        <authorList>
            <person name="Eguchi H."/>
            <person name="Yamamura S."/>
            <person name="Yamaoka K."/>
            <person name="Masegi T."/>
            <person name="Kamimura T."/>
            <person name="Yasuoka S."/>
        </authorList>
    </citation>
    <scope>NUCLEOTIDE SEQUENCE [MRNA] (ISOFORM 1)</scope>
</reference>
<reference key="3">
    <citation type="journal article" date="2004" name="Genome Res.">
        <title>The status, quality, and expansion of the NIH full-length cDNA project: the Mammalian Gene Collection (MGC).</title>
        <authorList>
            <consortium name="The MGC Project Team"/>
        </authorList>
    </citation>
    <scope>NUCLEOTIDE SEQUENCE [LARGE SCALE MRNA] (ISOFORM 1)</scope>
    <source>
        <strain>Czech II</strain>
        <tissue>Mammary tumor</tissue>
    </source>
</reference>
<reference key="4">
    <citation type="journal article" date="2014" name="J. Virol.">
        <title>TMPRSS2 and ADAM17 cleave ACE2 differentially and only proteolysis by TMPRSS2 augments entry driven by the severe acute respiratory syndrome coronavirus spike protein.</title>
        <authorList>
            <person name="Heurich A."/>
            <person name="Hofmann-Winkler H."/>
            <person name="Gierer S."/>
            <person name="Liepold T."/>
            <person name="Jahn O."/>
            <person name="Poehlmann S."/>
        </authorList>
    </citation>
    <scope>FUNCTION</scope>
</reference>
<reference key="5">
    <citation type="submission" date="2007-07" db="PDB data bank">
        <title>Crystal structure of SEA domain of transmembrane protease from Mus musculus.</title>
        <authorList>
            <consortium name="RIKEN structural genomics initiative (RSGI)"/>
        </authorList>
    </citation>
    <scope>X-RAY CRYSTALLOGRAPHY (1.92 ANGSTROMS) OF 44-164</scope>
</reference>
<protein>
    <recommendedName>
        <fullName>Transmembrane protease serine 11D</fullName>
        <ecNumber>3.4.21.-</ecNumber>
    </recommendedName>
    <alternativeName>
        <fullName>Adrenal secretory serine protease</fullName>
        <shortName>AsP</shortName>
    </alternativeName>
    <alternativeName>
        <fullName>Airway trypsin-like protease</fullName>
        <shortName>AT</shortName>
    </alternativeName>
    <component>
        <recommendedName>
            <fullName>Transmembrane protease serine 11D non-catalytic chain</fullName>
        </recommendedName>
    </component>
    <component>
        <recommendedName>
            <fullName>Transmembrane protease serine 11D catalytic chain</fullName>
        </recommendedName>
    </component>
</protein>